<feature type="chain" id="PRO_1000072038" description="Chaperone protein DnaK">
    <location>
        <begin position="1"/>
        <end position="617"/>
    </location>
</feature>
<feature type="region of interest" description="Disordered" evidence="2">
    <location>
        <begin position="573"/>
        <end position="617"/>
    </location>
</feature>
<feature type="compositionally biased region" description="Low complexity" evidence="2">
    <location>
        <begin position="573"/>
        <end position="590"/>
    </location>
</feature>
<feature type="compositionally biased region" description="Basic and acidic residues" evidence="2">
    <location>
        <begin position="596"/>
        <end position="617"/>
    </location>
</feature>
<feature type="modified residue" description="Phosphothreonine; by autocatalysis" evidence="1">
    <location>
        <position position="174"/>
    </location>
</feature>
<dbReference type="EMBL" id="CP000411">
    <property type="protein sequence ID" value="ABJ57181.1"/>
    <property type="molecule type" value="Genomic_DNA"/>
</dbReference>
<dbReference type="RefSeq" id="WP_011677667.1">
    <property type="nucleotide sequence ID" value="NC_008528.1"/>
</dbReference>
<dbReference type="SMR" id="Q04EE1"/>
<dbReference type="STRING" id="203123.OEOE_1309"/>
<dbReference type="KEGG" id="ooe:OEOE_1309"/>
<dbReference type="PATRIC" id="fig|203123.7.peg.1323"/>
<dbReference type="eggNOG" id="COG0443">
    <property type="taxonomic scope" value="Bacteria"/>
</dbReference>
<dbReference type="HOGENOM" id="CLU_005965_2_4_9"/>
<dbReference type="Proteomes" id="UP000000774">
    <property type="component" value="Chromosome"/>
</dbReference>
<dbReference type="GO" id="GO:0005524">
    <property type="term" value="F:ATP binding"/>
    <property type="evidence" value="ECO:0007669"/>
    <property type="project" value="UniProtKB-UniRule"/>
</dbReference>
<dbReference type="GO" id="GO:0140662">
    <property type="term" value="F:ATP-dependent protein folding chaperone"/>
    <property type="evidence" value="ECO:0007669"/>
    <property type="project" value="InterPro"/>
</dbReference>
<dbReference type="GO" id="GO:0051082">
    <property type="term" value="F:unfolded protein binding"/>
    <property type="evidence" value="ECO:0007669"/>
    <property type="project" value="InterPro"/>
</dbReference>
<dbReference type="CDD" id="cd10234">
    <property type="entry name" value="ASKHA_NBD_HSP70_DnaK-like"/>
    <property type="match status" value="1"/>
</dbReference>
<dbReference type="FunFam" id="2.60.34.10:FF:000014">
    <property type="entry name" value="Chaperone protein DnaK HSP70"/>
    <property type="match status" value="1"/>
</dbReference>
<dbReference type="FunFam" id="3.30.420.40:FF:000020">
    <property type="entry name" value="Chaperone protein HscA homolog"/>
    <property type="match status" value="1"/>
</dbReference>
<dbReference type="FunFam" id="1.20.1270.10:FF:000001">
    <property type="entry name" value="Molecular chaperone DnaK"/>
    <property type="match status" value="1"/>
</dbReference>
<dbReference type="FunFam" id="3.30.420.40:FF:000004">
    <property type="entry name" value="Molecular chaperone DnaK"/>
    <property type="match status" value="1"/>
</dbReference>
<dbReference type="FunFam" id="3.90.640.10:FF:000003">
    <property type="entry name" value="Molecular chaperone DnaK"/>
    <property type="match status" value="1"/>
</dbReference>
<dbReference type="Gene3D" id="1.20.1270.10">
    <property type="match status" value="1"/>
</dbReference>
<dbReference type="Gene3D" id="3.30.420.40">
    <property type="match status" value="3"/>
</dbReference>
<dbReference type="Gene3D" id="3.90.640.10">
    <property type="entry name" value="Actin, Chain A, domain 4"/>
    <property type="match status" value="1"/>
</dbReference>
<dbReference type="Gene3D" id="2.60.34.10">
    <property type="entry name" value="Substrate Binding Domain Of DNAk, Chain A, domain 1"/>
    <property type="match status" value="1"/>
</dbReference>
<dbReference type="HAMAP" id="MF_00332">
    <property type="entry name" value="DnaK"/>
    <property type="match status" value="1"/>
</dbReference>
<dbReference type="InterPro" id="IPR043129">
    <property type="entry name" value="ATPase_NBD"/>
</dbReference>
<dbReference type="InterPro" id="IPR012725">
    <property type="entry name" value="Chaperone_DnaK"/>
</dbReference>
<dbReference type="InterPro" id="IPR018181">
    <property type="entry name" value="Heat_shock_70_CS"/>
</dbReference>
<dbReference type="InterPro" id="IPR029048">
    <property type="entry name" value="HSP70_C_sf"/>
</dbReference>
<dbReference type="InterPro" id="IPR029047">
    <property type="entry name" value="HSP70_peptide-bd_sf"/>
</dbReference>
<dbReference type="InterPro" id="IPR013126">
    <property type="entry name" value="Hsp_70_fam"/>
</dbReference>
<dbReference type="NCBIfam" id="NF001413">
    <property type="entry name" value="PRK00290.1"/>
    <property type="match status" value="1"/>
</dbReference>
<dbReference type="NCBIfam" id="TIGR02350">
    <property type="entry name" value="prok_dnaK"/>
    <property type="match status" value="1"/>
</dbReference>
<dbReference type="PANTHER" id="PTHR19375">
    <property type="entry name" value="HEAT SHOCK PROTEIN 70KDA"/>
    <property type="match status" value="1"/>
</dbReference>
<dbReference type="Pfam" id="PF00012">
    <property type="entry name" value="HSP70"/>
    <property type="match status" value="1"/>
</dbReference>
<dbReference type="PRINTS" id="PR00301">
    <property type="entry name" value="HEATSHOCK70"/>
</dbReference>
<dbReference type="SUPFAM" id="SSF53067">
    <property type="entry name" value="Actin-like ATPase domain"/>
    <property type="match status" value="2"/>
</dbReference>
<dbReference type="SUPFAM" id="SSF100934">
    <property type="entry name" value="Heat shock protein 70kD (HSP70), C-terminal subdomain"/>
    <property type="match status" value="1"/>
</dbReference>
<dbReference type="SUPFAM" id="SSF100920">
    <property type="entry name" value="Heat shock protein 70kD (HSP70), peptide-binding domain"/>
    <property type="match status" value="1"/>
</dbReference>
<dbReference type="PROSITE" id="PS00297">
    <property type="entry name" value="HSP70_1"/>
    <property type="match status" value="1"/>
</dbReference>
<dbReference type="PROSITE" id="PS00329">
    <property type="entry name" value="HSP70_2"/>
    <property type="match status" value="1"/>
</dbReference>
<dbReference type="PROSITE" id="PS01036">
    <property type="entry name" value="HSP70_3"/>
    <property type="match status" value="1"/>
</dbReference>
<gene>
    <name evidence="1" type="primary">dnaK</name>
    <name type="ordered locus">OEOE_1309</name>
</gene>
<evidence type="ECO:0000255" key="1">
    <source>
        <dbReference type="HAMAP-Rule" id="MF_00332"/>
    </source>
</evidence>
<evidence type="ECO:0000256" key="2">
    <source>
        <dbReference type="SAM" id="MobiDB-lite"/>
    </source>
</evidence>
<keyword id="KW-0067">ATP-binding</keyword>
<keyword id="KW-0143">Chaperone</keyword>
<keyword id="KW-0547">Nucleotide-binding</keyword>
<keyword id="KW-0597">Phosphoprotein</keyword>
<keyword id="KW-1185">Reference proteome</keyword>
<keyword id="KW-0346">Stress response</keyword>
<protein>
    <recommendedName>
        <fullName evidence="1">Chaperone protein DnaK</fullName>
    </recommendedName>
    <alternativeName>
        <fullName evidence="1">HSP70</fullName>
    </alternativeName>
    <alternativeName>
        <fullName evidence="1">Heat shock 70 kDa protein</fullName>
    </alternativeName>
    <alternativeName>
        <fullName evidence="1">Heat shock protein 70</fullName>
    </alternativeName>
</protein>
<organism>
    <name type="scientific">Oenococcus oeni (strain ATCC BAA-331 / PSU-1)</name>
    <dbReference type="NCBI Taxonomy" id="203123"/>
    <lineage>
        <taxon>Bacteria</taxon>
        <taxon>Bacillati</taxon>
        <taxon>Bacillota</taxon>
        <taxon>Bacilli</taxon>
        <taxon>Lactobacillales</taxon>
        <taxon>Lactobacillaceae</taxon>
        <taxon>Oenococcus</taxon>
    </lineage>
</organism>
<reference key="1">
    <citation type="journal article" date="2006" name="Proc. Natl. Acad. Sci. U.S.A.">
        <title>Comparative genomics of the lactic acid bacteria.</title>
        <authorList>
            <person name="Makarova K.S."/>
            <person name="Slesarev A."/>
            <person name="Wolf Y.I."/>
            <person name="Sorokin A."/>
            <person name="Mirkin B."/>
            <person name="Koonin E.V."/>
            <person name="Pavlov A."/>
            <person name="Pavlova N."/>
            <person name="Karamychev V."/>
            <person name="Polouchine N."/>
            <person name="Shakhova V."/>
            <person name="Grigoriev I."/>
            <person name="Lou Y."/>
            <person name="Rohksar D."/>
            <person name="Lucas S."/>
            <person name="Huang K."/>
            <person name="Goodstein D.M."/>
            <person name="Hawkins T."/>
            <person name="Plengvidhya V."/>
            <person name="Welker D."/>
            <person name="Hughes J."/>
            <person name="Goh Y."/>
            <person name="Benson A."/>
            <person name="Baldwin K."/>
            <person name="Lee J.-H."/>
            <person name="Diaz-Muniz I."/>
            <person name="Dosti B."/>
            <person name="Smeianov V."/>
            <person name="Wechter W."/>
            <person name="Barabote R."/>
            <person name="Lorca G."/>
            <person name="Altermann E."/>
            <person name="Barrangou R."/>
            <person name="Ganesan B."/>
            <person name="Xie Y."/>
            <person name="Rawsthorne H."/>
            <person name="Tamir D."/>
            <person name="Parker C."/>
            <person name="Breidt F."/>
            <person name="Broadbent J.R."/>
            <person name="Hutkins R."/>
            <person name="O'Sullivan D."/>
            <person name="Steele J."/>
            <person name="Unlu G."/>
            <person name="Saier M.H. Jr."/>
            <person name="Klaenhammer T."/>
            <person name="Richardson P."/>
            <person name="Kozyavkin S."/>
            <person name="Weimer B.C."/>
            <person name="Mills D.A."/>
        </authorList>
    </citation>
    <scope>NUCLEOTIDE SEQUENCE [LARGE SCALE GENOMIC DNA]</scope>
    <source>
        <strain>ATCC BAA-331 / PSU-1</strain>
    </source>
</reference>
<proteinExistence type="inferred from homology"/>
<comment type="function">
    <text evidence="1">Acts as a chaperone.</text>
</comment>
<comment type="induction">
    <text evidence="1">By stress conditions e.g. heat shock.</text>
</comment>
<comment type="similarity">
    <text evidence="1">Belongs to the heat shock protein 70 family.</text>
</comment>
<sequence>MSKIIGIDLGTTNSAVAVMEGSQPKIITNPDGGRTTPSVVAFKNGEIQVGDVAKRQAIVNPETISSIKRHMGESNYRVKANGKEYRPEEISAMILQYIKKYAEDYLGETVNDAVITVPAYFNDAQRQATKDAGKIAGLNVQRIINEPTAAALAFGLDKLDKDQKILVYDLGGGTFDVSILELGDGVFEVLSTNGDTHLGGDDFDQKVIDWLVEDFKKENGVDLSTDSLALQRLKDEAEKAKKTLSSANEAQILLPFIHQNLNIDKTLTRAQFNQLTADLVERAKGPVQNAMKDAGLSFSDINEVILNGGSTRIPAVQDSVKELTGKEPNHSINPDEAVALGAAIQGAVITGDVKDVVLLDVTPLSLGIETMGGVMTKLIDRNTTIPTSKSQVFSTAANNQPAVDIHVLQGERPMAADNKTLGNFQLTDIPAAPRGVPQIEVSFDIDRNGIVSVSAKDKGTGKSQKITIQNPGNLSEDEINKMVKDAESNEEADKKKKEEVDLHNQVDQLIFSSEKTLSDVGDKLGDSDKKPVQDALDELKKAKDSNNIETLKEKKDALEKAAQALAVKLYQQAGPQSGAAGQTGKAGQAGPNSDGKTGDDGKTVDGDFKEVNPDDKK</sequence>
<name>DNAK_OENOB</name>
<accession>Q04EE1</accession>